<proteinExistence type="inferred from homology"/>
<name>GRPE_SULNB</name>
<organism>
    <name type="scientific">Sulfurovum sp. (strain NBC37-1)</name>
    <dbReference type="NCBI Taxonomy" id="387093"/>
    <lineage>
        <taxon>Bacteria</taxon>
        <taxon>Pseudomonadati</taxon>
        <taxon>Campylobacterota</taxon>
        <taxon>Epsilonproteobacteria</taxon>
        <taxon>Campylobacterales</taxon>
        <taxon>Sulfurovaceae</taxon>
        <taxon>Sulfurovum</taxon>
    </lineage>
</organism>
<reference key="1">
    <citation type="journal article" date="2007" name="Proc. Natl. Acad. Sci. U.S.A.">
        <title>Deep-sea vent epsilon-proteobacterial genomes provide insights into emergence of pathogens.</title>
        <authorList>
            <person name="Nakagawa S."/>
            <person name="Takaki Y."/>
            <person name="Shimamura S."/>
            <person name="Reysenbach A.-L."/>
            <person name="Takai K."/>
            <person name="Horikoshi K."/>
        </authorList>
    </citation>
    <scope>NUCLEOTIDE SEQUENCE [LARGE SCALE GENOMIC DNA]</scope>
    <source>
        <strain>NBC37-1</strain>
    </source>
</reference>
<protein>
    <recommendedName>
        <fullName evidence="1">Protein GrpE</fullName>
    </recommendedName>
    <alternativeName>
        <fullName evidence="1">HSP-70 cofactor</fullName>
    </alternativeName>
</protein>
<keyword id="KW-0143">Chaperone</keyword>
<keyword id="KW-0963">Cytoplasm</keyword>
<keyword id="KW-0346">Stress response</keyword>
<comment type="function">
    <text evidence="1">Participates actively in the response to hyperosmotic and heat shock by preventing the aggregation of stress-denatured proteins, in association with DnaK and GrpE. It is the nucleotide exchange factor for DnaK and may function as a thermosensor. Unfolded proteins bind initially to DnaJ; upon interaction with the DnaJ-bound protein, DnaK hydrolyzes its bound ATP, resulting in the formation of a stable complex. GrpE releases ADP from DnaK; ATP binding to DnaK triggers the release of the substrate protein, thus completing the reaction cycle. Several rounds of ATP-dependent interactions between DnaJ, DnaK and GrpE are required for fully efficient folding.</text>
</comment>
<comment type="subunit">
    <text evidence="1">Homodimer.</text>
</comment>
<comment type="subcellular location">
    <subcellularLocation>
        <location evidence="1">Cytoplasm</location>
    </subcellularLocation>
</comment>
<comment type="similarity">
    <text evidence="1">Belongs to the GrpE family.</text>
</comment>
<dbReference type="EMBL" id="AP009179">
    <property type="protein sequence ID" value="BAF72820.1"/>
    <property type="molecule type" value="Genomic_DNA"/>
</dbReference>
<dbReference type="RefSeq" id="WP_012083633.1">
    <property type="nucleotide sequence ID" value="NC_009663.1"/>
</dbReference>
<dbReference type="SMR" id="A6QBG1"/>
<dbReference type="STRING" id="387093.SUN_1873"/>
<dbReference type="KEGG" id="sun:SUN_1873"/>
<dbReference type="eggNOG" id="COG0576">
    <property type="taxonomic scope" value="Bacteria"/>
</dbReference>
<dbReference type="HOGENOM" id="CLU_057217_6_3_7"/>
<dbReference type="OrthoDB" id="9789811at2"/>
<dbReference type="Proteomes" id="UP000006378">
    <property type="component" value="Chromosome"/>
</dbReference>
<dbReference type="GO" id="GO:0005829">
    <property type="term" value="C:cytosol"/>
    <property type="evidence" value="ECO:0007669"/>
    <property type="project" value="TreeGrafter"/>
</dbReference>
<dbReference type="GO" id="GO:0000774">
    <property type="term" value="F:adenyl-nucleotide exchange factor activity"/>
    <property type="evidence" value="ECO:0007669"/>
    <property type="project" value="InterPro"/>
</dbReference>
<dbReference type="GO" id="GO:0042803">
    <property type="term" value="F:protein homodimerization activity"/>
    <property type="evidence" value="ECO:0007669"/>
    <property type="project" value="InterPro"/>
</dbReference>
<dbReference type="GO" id="GO:0051087">
    <property type="term" value="F:protein-folding chaperone binding"/>
    <property type="evidence" value="ECO:0007669"/>
    <property type="project" value="InterPro"/>
</dbReference>
<dbReference type="GO" id="GO:0051082">
    <property type="term" value="F:unfolded protein binding"/>
    <property type="evidence" value="ECO:0007669"/>
    <property type="project" value="TreeGrafter"/>
</dbReference>
<dbReference type="GO" id="GO:0006457">
    <property type="term" value="P:protein folding"/>
    <property type="evidence" value="ECO:0007669"/>
    <property type="project" value="InterPro"/>
</dbReference>
<dbReference type="CDD" id="cd00446">
    <property type="entry name" value="GrpE"/>
    <property type="match status" value="1"/>
</dbReference>
<dbReference type="FunFam" id="2.30.22.10:FF:000001">
    <property type="entry name" value="Protein GrpE"/>
    <property type="match status" value="1"/>
</dbReference>
<dbReference type="Gene3D" id="3.90.20.20">
    <property type="match status" value="1"/>
</dbReference>
<dbReference type="Gene3D" id="2.30.22.10">
    <property type="entry name" value="Head domain of nucleotide exchange factor GrpE"/>
    <property type="match status" value="1"/>
</dbReference>
<dbReference type="HAMAP" id="MF_01151">
    <property type="entry name" value="GrpE"/>
    <property type="match status" value="1"/>
</dbReference>
<dbReference type="InterPro" id="IPR000740">
    <property type="entry name" value="GrpE"/>
</dbReference>
<dbReference type="InterPro" id="IPR013805">
    <property type="entry name" value="GrpE_coiled_coil"/>
</dbReference>
<dbReference type="InterPro" id="IPR009012">
    <property type="entry name" value="GrpE_head"/>
</dbReference>
<dbReference type="NCBIfam" id="NF010738">
    <property type="entry name" value="PRK14140.1"/>
    <property type="match status" value="1"/>
</dbReference>
<dbReference type="PANTHER" id="PTHR21237">
    <property type="entry name" value="GRPE PROTEIN"/>
    <property type="match status" value="1"/>
</dbReference>
<dbReference type="PANTHER" id="PTHR21237:SF23">
    <property type="entry name" value="GRPE PROTEIN HOMOLOG, MITOCHONDRIAL"/>
    <property type="match status" value="1"/>
</dbReference>
<dbReference type="Pfam" id="PF01025">
    <property type="entry name" value="GrpE"/>
    <property type="match status" value="1"/>
</dbReference>
<dbReference type="PRINTS" id="PR00773">
    <property type="entry name" value="GRPEPROTEIN"/>
</dbReference>
<dbReference type="SUPFAM" id="SSF58014">
    <property type="entry name" value="Coiled-coil domain of nucleotide exchange factor GrpE"/>
    <property type="match status" value="1"/>
</dbReference>
<dbReference type="SUPFAM" id="SSF51064">
    <property type="entry name" value="Head domain of nucleotide exchange factor GrpE"/>
    <property type="match status" value="1"/>
</dbReference>
<evidence type="ECO:0000255" key="1">
    <source>
        <dbReference type="HAMAP-Rule" id="MF_01151"/>
    </source>
</evidence>
<evidence type="ECO:0000256" key="2">
    <source>
        <dbReference type="SAM" id="MobiDB-lite"/>
    </source>
</evidence>
<gene>
    <name evidence="1" type="primary">grpE</name>
    <name type="ordered locus">SUN_1873</name>
</gene>
<sequence length="184" mass="20840">MSQETEKDLEQTQNEELVEEAQSDEKKDQEVDPVEAAQAEAAEYKDKYIRAHADFENAKKRLEKDKMNAVAYANESFAKDILAVLDSFENALSAIEGANKENAAEVLEKMQEGVKLTYEQLKKVLEKNSIKEIESKGTFNPEVHQAIMQVDSDEHKTDDIVQVMQKGYTIKDRVLRPAMVSTAK</sequence>
<feature type="chain" id="PRO_1000053655" description="Protein GrpE">
    <location>
        <begin position="1"/>
        <end position="184"/>
    </location>
</feature>
<feature type="region of interest" description="Disordered" evidence="2">
    <location>
        <begin position="1"/>
        <end position="38"/>
    </location>
</feature>
<feature type="compositionally biased region" description="Basic and acidic residues" evidence="2">
    <location>
        <begin position="1"/>
        <end position="10"/>
    </location>
</feature>
<accession>A6QBG1</accession>